<accession>Q92JG1</accession>
<organism>
    <name type="scientific">Rickettsia conorii (strain ATCC VR-613 / Malish 7)</name>
    <dbReference type="NCBI Taxonomy" id="272944"/>
    <lineage>
        <taxon>Bacteria</taxon>
        <taxon>Pseudomonadati</taxon>
        <taxon>Pseudomonadota</taxon>
        <taxon>Alphaproteobacteria</taxon>
        <taxon>Rickettsiales</taxon>
        <taxon>Rickettsiaceae</taxon>
        <taxon>Rickettsieae</taxon>
        <taxon>Rickettsia</taxon>
        <taxon>spotted fever group</taxon>
    </lineage>
</organism>
<comment type="function">
    <text evidence="1">Transports S-adenosylmethionine.</text>
</comment>
<comment type="subcellular location">
    <subcellularLocation>
        <location evidence="3">Cell inner membrane</location>
        <topology evidence="3">Multi-pass membrane protein</topology>
    </subcellularLocation>
</comment>
<comment type="similarity">
    <text evidence="3">Belongs to the drug/metabolite transporter (DMT) superfamily. 10 TMS drug/metabolite exporter (DME) (TC 2.A.7.3) family.</text>
</comment>
<reference key="1">
    <citation type="journal article" date="2001" name="Science">
        <title>Mechanisms of evolution in Rickettsia conorii and R. prowazekii.</title>
        <authorList>
            <person name="Ogata H."/>
            <person name="Audic S."/>
            <person name="Renesto-Audiffren P."/>
            <person name="Fournier P.-E."/>
            <person name="Barbe V."/>
            <person name="Samson D."/>
            <person name="Roux V."/>
            <person name="Cossart P."/>
            <person name="Weissenbach J."/>
            <person name="Claverie J.-M."/>
            <person name="Raoult D."/>
        </authorList>
    </citation>
    <scope>NUCLEOTIDE SEQUENCE [LARGE SCALE GENOMIC DNA]</scope>
    <source>
        <strain>ATCC VR-613 / Malish 7</strain>
    </source>
</reference>
<gene>
    <name type="primary">sam</name>
    <name type="ordered locus">RC0106</name>
</gene>
<protein>
    <recommendedName>
        <fullName>S-adenosylmethionine uptake transporter</fullName>
    </recommendedName>
</protein>
<name>SAM_RICCN</name>
<keyword id="KW-0029">Amino-acid transport</keyword>
<keyword id="KW-0997">Cell inner membrane</keyword>
<keyword id="KW-1003">Cell membrane</keyword>
<keyword id="KW-0472">Membrane</keyword>
<keyword id="KW-0677">Repeat</keyword>
<keyword id="KW-0812">Transmembrane</keyword>
<keyword id="KW-1133">Transmembrane helix</keyword>
<keyword id="KW-0813">Transport</keyword>
<sequence length="294" mass="33071">MNDALKTYLTGIGWFLLSLVSSSANDVISKYLGTRLHSFEVAFFRFFFSSIVLLPFVVYYGKNTLKTSRPFVHILRGLLLFFGMTSWTYGLTIAPVTTATVVSFSIPLFTLILAVFFLNENIIWPRWVVTVVGFIGLVVTLKPHAEDFNPEILYFVLAAISFAMLDIINKKFVIKESMISMLFYSAIVTAIVSLPVASQYWLTPSSFELALLFVLGSSGSLILFFLLKAFSMVDATATAPYRYLELVISVIAAYFIFNEFPDKSTLHGAVIIIPTTLFIIYSEKKAMNRKHESQ</sequence>
<dbReference type="EMBL" id="AE006914">
    <property type="protein sequence ID" value="AAL02644.1"/>
    <property type="molecule type" value="Genomic_DNA"/>
</dbReference>
<dbReference type="PIR" id="B97713">
    <property type="entry name" value="B97713"/>
</dbReference>
<dbReference type="RefSeq" id="WP_004996775.1">
    <property type="nucleotide sequence ID" value="NC_003103.1"/>
</dbReference>
<dbReference type="SMR" id="Q92JG1"/>
<dbReference type="KEGG" id="rco:RC0106"/>
<dbReference type="HOGENOM" id="CLU_032828_0_0_5"/>
<dbReference type="Proteomes" id="UP000000816">
    <property type="component" value="Chromosome"/>
</dbReference>
<dbReference type="GO" id="GO:0005886">
    <property type="term" value="C:plasma membrane"/>
    <property type="evidence" value="ECO:0007669"/>
    <property type="project" value="UniProtKB-SubCell"/>
</dbReference>
<dbReference type="GO" id="GO:0006865">
    <property type="term" value="P:amino acid transport"/>
    <property type="evidence" value="ECO:0007669"/>
    <property type="project" value="UniProtKB-KW"/>
</dbReference>
<dbReference type="InterPro" id="IPR000620">
    <property type="entry name" value="EamA_dom"/>
</dbReference>
<dbReference type="PANTHER" id="PTHR22911">
    <property type="entry name" value="ACYL-MALONYL CONDENSING ENZYME-RELATED"/>
    <property type="match status" value="1"/>
</dbReference>
<dbReference type="PANTHER" id="PTHR22911:SF6">
    <property type="entry name" value="SOLUTE CARRIER FAMILY 35 MEMBER G1"/>
    <property type="match status" value="1"/>
</dbReference>
<dbReference type="Pfam" id="PF00892">
    <property type="entry name" value="EamA"/>
    <property type="match status" value="2"/>
</dbReference>
<dbReference type="SUPFAM" id="SSF103481">
    <property type="entry name" value="Multidrug resistance efflux transporter EmrE"/>
    <property type="match status" value="2"/>
</dbReference>
<feature type="chain" id="PRO_0000280995" description="S-adenosylmethionine uptake transporter">
    <location>
        <begin position="1"/>
        <end position="294"/>
    </location>
</feature>
<feature type="transmembrane region" description="Helical" evidence="2">
    <location>
        <begin position="8"/>
        <end position="28"/>
    </location>
</feature>
<feature type="transmembrane region" description="Helical" evidence="2">
    <location>
        <begin position="41"/>
        <end position="61"/>
    </location>
</feature>
<feature type="transmembrane region" description="Helical" evidence="2">
    <location>
        <begin position="74"/>
        <end position="91"/>
    </location>
</feature>
<feature type="transmembrane region" description="Helical" evidence="2">
    <location>
        <begin position="98"/>
        <end position="118"/>
    </location>
</feature>
<feature type="transmembrane region" description="Helical" evidence="2">
    <location>
        <begin position="121"/>
        <end position="141"/>
    </location>
</feature>
<feature type="transmembrane region" description="Helical" evidence="2">
    <location>
        <begin position="148"/>
        <end position="168"/>
    </location>
</feature>
<feature type="transmembrane region" description="Helical" evidence="2">
    <location>
        <begin position="177"/>
        <end position="197"/>
    </location>
</feature>
<feature type="transmembrane region" description="Helical" evidence="2">
    <location>
        <begin position="207"/>
        <end position="227"/>
    </location>
</feature>
<feature type="transmembrane region" description="Helical" evidence="2">
    <location>
        <begin position="237"/>
        <end position="257"/>
    </location>
</feature>
<feature type="transmembrane region" description="Helical" evidence="2">
    <location>
        <begin position="260"/>
        <end position="280"/>
    </location>
</feature>
<feature type="domain" description="EamA 1">
    <location>
        <begin position="21"/>
        <end position="141"/>
    </location>
</feature>
<feature type="domain" description="EamA 2">
    <location>
        <begin position="160"/>
        <end position="280"/>
    </location>
</feature>
<proteinExistence type="inferred from homology"/>
<evidence type="ECO:0000250" key="1"/>
<evidence type="ECO:0000255" key="2"/>
<evidence type="ECO:0000305" key="3"/>